<dbReference type="EMBL" id="CP000829">
    <property type="protein sequence ID" value="ACI61335.1"/>
    <property type="molecule type" value="Genomic_DNA"/>
</dbReference>
<dbReference type="SMR" id="B5XLX3"/>
<dbReference type="KEGG" id="soz:Spy49_1035c"/>
<dbReference type="HOGENOM" id="CLU_108696_19_0_9"/>
<dbReference type="UniPathway" id="UPA00556"/>
<dbReference type="Proteomes" id="UP000001039">
    <property type="component" value="Chromosome"/>
</dbReference>
<dbReference type="GO" id="GO:0005737">
    <property type="term" value="C:cytoplasm"/>
    <property type="evidence" value="ECO:0007669"/>
    <property type="project" value="UniProtKB-SubCell"/>
</dbReference>
<dbReference type="GO" id="GO:0036370">
    <property type="term" value="F:D-alanyl carrier activity"/>
    <property type="evidence" value="ECO:0007669"/>
    <property type="project" value="UniProtKB-UniRule"/>
</dbReference>
<dbReference type="GO" id="GO:0071555">
    <property type="term" value="P:cell wall organization"/>
    <property type="evidence" value="ECO:0007669"/>
    <property type="project" value="UniProtKB-KW"/>
</dbReference>
<dbReference type="GO" id="GO:0070395">
    <property type="term" value="P:lipoteichoic acid biosynthetic process"/>
    <property type="evidence" value="ECO:0007669"/>
    <property type="project" value="UniProtKB-UniRule"/>
</dbReference>
<dbReference type="Gene3D" id="1.10.1200.10">
    <property type="entry name" value="ACP-like"/>
    <property type="match status" value="1"/>
</dbReference>
<dbReference type="HAMAP" id="MF_00565">
    <property type="entry name" value="DltC"/>
    <property type="match status" value="1"/>
</dbReference>
<dbReference type="InterPro" id="IPR036736">
    <property type="entry name" value="ACP-like_sf"/>
</dbReference>
<dbReference type="InterPro" id="IPR003230">
    <property type="entry name" value="DltC"/>
</dbReference>
<dbReference type="InterPro" id="IPR009081">
    <property type="entry name" value="PP-bd_ACP"/>
</dbReference>
<dbReference type="NCBIfam" id="TIGR01688">
    <property type="entry name" value="dltC"/>
    <property type="match status" value="1"/>
</dbReference>
<dbReference type="NCBIfam" id="NF003464">
    <property type="entry name" value="PRK05087.1"/>
    <property type="match status" value="1"/>
</dbReference>
<dbReference type="Pfam" id="PF00550">
    <property type="entry name" value="PP-binding"/>
    <property type="match status" value="1"/>
</dbReference>
<dbReference type="SUPFAM" id="SSF47336">
    <property type="entry name" value="ACP-like"/>
    <property type="match status" value="1"/>
</dbReference>
<dbReference type="PROSITE" id="PS50075">
    <property type="entry name" value="CARRIER"/>
    <property type="match status" value="1"/>
</dbReference>
<reference key="1">
    <citation type="journal article" date="2008" name="J. Bacteriol.">
        <title>Genome sequence of a nephritogenic and highly transformable M49 strain of Streptococcus pyogenes.</title>
        <authorList>
            <person name="McShan W.M."/>
            <person name="Ferretti J.J."/>
            <person name="Karasawa T."/>
            <person name="Suvorov A.N."/>
            <person name="Lin S."/>
            <person name="Qin B."/>
            <person name="Jia H."/>
            <person name="Kenton S."/>
            <person name="Najar F."/>
            <person name="Wu H."/>
            <person name="Scott J."/>
            <person name="Roe B.A."/>
            <person name="Savic D.J."/>
        </authorList>
    </citation>
    <scope>NUCLEOTIDE SEQUENCE [LARGE SCALE GENOMIC DNA]</scope>
    <source>
        <strain>NZ131</strain>
    </source>
</reference>
<comment type="function">
    <text evidence="1">Carrier protein involved in the D-alanylation of lipoteichoic acid (LTA). The loading of thioester-linked D-alanine onto DltC is catalyzed by D-alanine--D-alanyl carrier protein ligase DltA. The DltC-carried D-alanyl group is further transferred to cell membrane phosphatidylglycerol (PG) by forming an ester bond, probably catalyzed by DltD. D-alanylation of LTA plays an important role in modulating the properties of the cell wall in Gram-positive bacteria, influencing the net charge of the cell wall.</text>
</comment>
<comment type="pathway">
    <text evidence="1">Cell wall biogenesis; lipoteichoic acid biosynthesis.</text>
</comment>
<comment type="subcellular location">
    <subcellularLocation>
        <location evidence="1">Cytoplasm</location>
    </subcellularLocation>
</comment>
<comment type="PTM">
    <text evidence="1">4'-phosphopantetheine is transferred from CoA to a specific serine of apo-DCP.</text>
</comment>
<comment type="similarity">
    <text evidence="1">Belongs to the DltC family.</text>
</comment>
<feature type="chain" id="PRO_1000129405" description="D-alanyl carrier protein">
    <location>
        <begin position="1"/>
        <end position="79"/>
    </location>
</feature>
<feature type="domain" description="Carrier" evidence="1">
    <location>
        <begin position="1"/>
        <end position="77"/>
    </location>
</feature>
<feature type="modified residue" description="O-(pantetheine 4'-phosphoryl)serine" evidence="1">
    <location>
        <position position="35"/>
    </location>
</feature>
<organism>
    <name type="scientific">Streptococcus pyogenes serotype M49 (strain NZ131)</name>
    <dbReference type="NCBI Taxonomy" id="471876"/>
    <lineage>
        <taxon>Bacteria</taxon>
        <taxon>Bacillati</taxon>
        <taxon>Bacillota</taxon>
        <taxon>Bacilli</taxon>
        <taxon>Lactobacillales</taxon>
        <taxon>Streptococcaceae</taxon>
        <taxon>Streptococcus</taxon>
    </lineage>
</organism>
<proteinExistence type="inferred from homology"/>
<gene>
    <name evidence="1" type="primary">dltC</name>
    <name type="ordered locus">Spy49_1035c</name>
</gene>
<evidence type="ECO:0000255" key="1">
    <source>
        <dbReference type="HAMAP-Rule" id="MF_00565"/>
    </source>
</evidence>
<sequence length="79" mass="9010">MSIEETVIELFDRLFMEDVSEMMDEDLFDAGVLDSLGTVELIVELESTFNIKVPISEFGRDDWNTVTKIVQGVEELQHA</sequence>
<protein>
    <recommendedName>
        <fullName evidence="1">D-alanyl carrier protein</fullName>
        <shortName evidence="1">DCP</shortName>
    </recommendedName>
    <alternativeName>
        <fullName evidence="1">D-alanine--poly(phosphoribitol) ligase subunit 2</fullName>
    </alternativeName>
</protein>
<accession>B5XLX3</accession>
<name>DLTC_STRPZ</name>
<keyword id="KW-0961">Cell wall biogenesis/degradation</keyword>
<keyword id="KW-0963">Cytoplasm</keyword>
<keyword id="KW-0596">Phosphopantetheine</keyword>
<keyword id="KW-0597">Phosphoprotein</keyword>